<dbReference type="SMR" id="P01678"/>
<dbReference type="FunCoup" id="P01678">
    <property type="interactions" value="580"/>
</dbReference>
<dbReference type="InParanoid" id="P01678"/>
<dbReference type="Proteomes" id="UP000000589">
    <property type="component" value="Unplaced"/>
</dbReference>
<dbReference type="RNAct" id="P01678">
    <property type="molecule type" value="protein"/>
</dbReference>
<dbReference type="GO" id="GO:0019814">
    <property type="term" value="C:immunoglobulin complex"/>
    <property type="evidence" value="ECO:0000318"/>
    <property type="project" value="GO_Central"/>
</dbReference>
<dbReference type="GO" id="GO:0002250">
    <property type="term" value="P:adaptive immune response"/>
    <property type="evidence" value="ECO:0007669"/>
    <property type="project" value="UniProtKB-KW"/>
</dbReference>
<dbReference type="GO" id="GO:0006955">
    <property type="term" value="P:immune response"/>
    <property type="evidence" value="ECO:0000318"/>
    <property type="project" value="GO_Central"/>
</dbReference>
<dbReference type="FunFam" id="2.60.40.10:FF:001317">
    <property type="entry name" value="Immunoglobulin kappa chain variable 4-54"/>
    <property type="match status" value="1"/>
</dbReference>
<dbReference type="Gene3D" id="2.60.40.10">
    <property type="entry name" value="Immunoglobulins"/>
    <property type="match status" value="1"/>
</dbReference>
<dbReference type="InterPro" id="IPR007110">
    <property type="entry name" value="Ig-like_dom"/>
</dbReference>
<dbReference type="InterPro" id="IPR036179">
    <property type="entry name" value="Ig-like_dom_sf"/>
</dbReference>
<dbReference type="InterPro" id="IPR013783">
    <property type="entry name" value="Ig-like_fold"/>
</dbReference>
<dbReference type="InterPro" id="IPR003599">
    <property type="entry name" value="Ig_sub"/>
</dbReference>
<dbReference type="InterPro" id="IPR013106">
    <property type="entry name" value="Ig_V-set"/>
</dbReference>
<dbReference type="InterPro" id="IPR050150">
    <property type="entry name" value="IgV_Light_Chain"/>
</dbReference>
<dbReference type="PANTHER" id="PTHR23267">
    <property type="entry name" value="IMMUNOGLOBULIN LIGHT CHAIN"/>
    <property type="match status" value="1"/>
</dbReference>
<dbReference type="Pfam" id="PF07686">
    <property type="entry name" value="V-set"/>
    <property type="match status" value="1"/>
</dbReference>
<dbReference type="SMART" id="SM00409">
    <property type="entry name" value="IG"/>
    <property type="match status" value="1"/>
</dbReference>
<dbReference type="SMART" id="SM00406">
    <property type="entry name" value="IGv"/>
    <property type="match status" value="1"/>
</dbReference>
<dbReference type="SUPFAM" id="SSF48726">
    <property type="entry name" value="Immunoglobulin"/>
    <property type="match status" value="1"/>
</dbReference>
<dbReference type="PROSITE" id="PS50835">
    <property type="entry name" value="IG_LIKE"/>
    <property type="match status" value="1"/>
</dbReference>
<organism>
    <name type="scientific">Mus musculus</name>
    <name type="common">Mouse</name>
    <dbReference type="NCBI Taxonomy" id="10090"/>
    <lineage>
        <taxon>Eukaryota</taxon>
        <taxon>Metazoa</taxon>
        <taxon>Chordata</taxon>
        <taxon>Craniata</taxon>
        <taxon>Vertebrata</taxon>
        <taxon>Euteleostomi</taxon>
        <taxon>Mammalia</taxon>
        <taxon>Eutheria</taxon>
        <taxon>Euarchontoglires</taxon>
        <taxon>Glires</taxon>
        <taxon>Rodentia</taxon>
        <taxon>Myomorpha</taxon>
        <taxon>Muroidea</taxon>
        <taxon>Muridae</taxon>
        <taxon>Murinae</taxon>
        <taxon>Mus</taxon>
        <taxon>Mus</taxon>
    </lineage>
</organism>
<keyword id="KW-1064">Adaptive immunity</keyword>
<keyword id="KW-0903">Direct protein sequencing</keyword>
<keyword id="KW-1015">Disulfide bond</keyword>
<keyword id="KW-0391">Immunity</keyword>
<keyword id="KW-1280">Immunoglobulin</keyword>
<keyword id="KW-1185">Reference proteome</keyword>
<protein>
    <recommendedName>
        <fullName>Ig kappa chain V-VI region SAPC 10</fullName>
    </recommendedName>
</protein>
<name>KV6A4_MOUSE</name>
<reference key="1">
    <citation type="journal article" date="1980" name="Proc. Natl. Acad. Sci. U.S.A.">
        <title>Kappa chain joining segments and structural diversity of antibody combining sites.</title>
        <authorList>
            <person name="Rudikoff S."/>
            <person name="Rao D.N."/>
            <person name="Glaudemans C.P.J."/>
            <person name="Potter M."/>
        </authorList>
    </citation>
    <scope>PROTEIN SEQUENCE</scope>
</reference>
<evidence type="ECO:0000255" key="1">
    <source>
        <dbReference type="PROSITE-ProRule" id="PRU00114"/>
    </source>
</evidence>
<sequence length="107" mass="11554">EIVLTQSPAITAASLGQKVTITCSASSSVSYMHWYQQKSGTSPKPWIYEISKLASGVPARFSGSGSGTSYSLTISSMEAEDAAIYYCQQWNYPLITFGGGTKLEIKR</sequence>
<accession>P01678</accession>
<comment type="miscellaneous">
    <text>This chain was isolated from a myeloma protein that bind galactan.</text>
</comment>
<proteinExistence type="evidence at protein level"/>
<feature type="chain" id="PRO_0000059813" description="Ig kappa chain V-VI region SAPC 10">
    <location>
        <begin position="1"/>
        <end position="107" status="greater than"/>
    </location>
</feature>
<feature type="region of interest" description="Framework-1">
    <location>
        <begin position="1"/>
        <end position="23"/>
    </location>
</feature>
<feature type="region of interest" description="Complementarity-determining-1">
    <location>
        <begin position="24"/>
        <end position="33"/>
    </location>
</feature>
<feature type="region of interest" description="Framework-2">
    <location>
        <begin position="34"/>
        <end position="48"/>
    </location>
</feature>
<feature type="region of interest" description="Complementarity-determining-2">
    <location>
        <begin position="49"/>
        <end position="55"/>
    </location>
</feature>
<feature type="region of interest" description="Framework-3">
    <location>
        <begin position="56"/>
        <end position="87"/>
    </location>
</feature>
<feature type="region of interest" description="Complementarity-determining-3">
    <location>
        <begin position="88"/>
        <end position="96"/>
    </location>
</feature>
<feature type="region of interest" description="Framework-4">
    <location>
        <begin position="97"/>
        <end position="106"/>
    </location>
</feature>
<feature type="disulfide bond" evidence="1">
    <location>
        <begin position="23"/>
        <end position="87"/>
    </location>
</feature>
<feature type="non-terminal residue">
    <location>
        <position position="107"/>
    </location>
</feature>